<name>GUNA_BACPU</name>
<gene>
    <name type="primary">eglA</name>
</gene>
<keyword id="KW-0119">Carbohydrate metabolism</keyword>
<keyword id="KW-0136">Cellulose degradation</keyword>
<keyword id="KW-0326">Glycosidase</keyword>
<keyword id="KW-0378">Hydrolase</keyword>
<keyword id="KW-0624">Polysaccharide degradation</keyword>
<keyword id="KW-0964">Secreted</keyword>
<feature type="chain" id="PRO_5000091857" description="Endoglucanase A">
    <location>
        <begin position="1"/>
        <end position="659"/>
    </location>
</feature>
<feature type="domain" description="CBM3" evidence="1">
    <location>
        <begin position="501"/>
        <end position="658"/>
    </location>
</feature>
<feature type="region of interest" description="Catalytic">
    <location>
        <begin position="1"/>
        <end position="500"/>
    </location>
</feature>
<feature type="region of interest" description="Disordered" evidence="5">
    <location>
        <begin position="413"/>
        <end position="433"/>
    </location>
</feature>
<feature type="active site" description="Nucleophile" evidence="4">
    <location>
        <position position="101"/>
    </location>
</feature>
<feature type="active site" evidence="2">
    <location>
        <position position="419"/>
    </location>
</feature>
<feature type="active site" evidence="3">
    <location>
        <position position="457"/>
    </location>
</feature>
<feature type="active site" evidence="3">
    <location>
        <position position="466"/>
    </location>
</feature>
<protein>
    <recommendedName>
        <fullName>Endoglucanase A</fullName>
        <ecNumber>3.2.1.4</ecNumber>
    </recommendedName>
    <alternativeName>
        <fullName>Endo-1,4-beta-glucanase A</fullName>
    </alternativeName>
</protein>
<dbReference type="EC" id="3.2.1.4"/>
<dbReference type="EMBL" id="AY339624">
    <property type="protein sequence ID" value="AAQ91573.1"/>
    <property type="molecule type" value="Genomic_DNA"/>
</dbReference>
<dbReference type="SMR" id="Q5YLG1"/>
<dbReference type="CAZy" id="CBM3">
    <property type="family name" value="Carbohydrate-Binding Module Family 3"/>
</dbReference>
<dbReference type="CAZy" id="GH9">
    <property type="family name" value="Glycoside Hydrolase Family 9"/>
</dbReference>
<dbReference type="GO" id="GO:0005576">
    <property type="term" value="C:extracellular region"/>
    <property type="evidence" value="ECO:0007669"/>
    <property type="project" value="UniProtKB-SubCell"/>
</dbReference>
<dbReference type="GO" id="GO:0008810">
    <property type="term" value="F:cellulase activity"/>
    <property type="evidence" value="ECO:0007669"/>
    <property type="project" value="UniProtKB-EC"/>
</dbReference>
<dbReference type="GO" id="GO:0030248">
    <property type="term" value="F:cellulose binding"/>
    <property type="evidence" value="ECO:0007669"/>
    <property type="project" value="InterPro"/>
</dbReference>
<dbReference type="GO" id="GO:0030245">
    <property type="term" value="P:cellulose catabolic process"/>
    <property type="evidence" value="ECO:0007669"/>
    <property type="project" value="UniProtKB-KW"/>
</dbReference>
<dbReference type="FunFam" id="1.50.10.10:FF:000020">
    <property type="entry name" value="Endoglucanase"/>
    <property type="match status" value="1"/>
</dbReference>
<dbReference type="Gene3D" id="1.50.10.10">
    <property type="match status" value="1"/>
</dbReference>
<dbReference type="Gene3D" id="2.60.40.710">
    <property type="entry name" value="Endoglucanase-like"/>
    <property type="match status" value="1"/>
</dbReference>
<dbReference type="InterPro" id="IPR008928">
    <property type="entry name" value="6-hairpin_glycosidase_sf"/>
</dbReference>
<dbReference type="InterPro" id="IPR012341">
    <property type="entry name" value="6hp_glycosidase-like_sf"/>
</dbReference>
<dbReference type="InterPro" id="IPR008965">
    <property type="entry name" value="CBM2/CBM3_carb-bd_dom_sf"/>
</dbReference>
<dbReference type="InterPro" id="IPR001956">
    <property type="entry name" value="CBM3"/>
</dbReference>
<dbReference type="InterPro" id="IPR036966">
    <property type="entry name" value="CBM3_sf"/>
</dbReference>
<dbReference type="InterPro" id="IPR001701">
    <property type="entry name" value="Glyco_hydro_9"/>
</dbReference>
<dbReference type="InterPro" id="IPR033126">
    <property type="entry name" value="Glyco_hydro_9_Asp/Glu_AS"/>
</dbReference>
<dbReference type="InterPro" id="IPR018221">
    <property type="entry name" value="Glyco_hydro_9_His_AS"/>
</dbReference>
<dbReference type="PANTHER" id="PTHR22298">
    <property type="entry name" value="ENDO-1,4-BETA-GLUCANASE"/>
    <property type="match status" value="1"/>
</dbReference>
<dbReference type="Pfam" id="PF00942">
    <property type="entry name" value="CBM_3"/>
    <property type="match status" value="1"/>
</dbReference>
<dbReference type="Pfam" id="PF00759">
    <property type="entry name" value="Glyco_hydro_9"/>
    <property type="match status" value="1"/>
</dbReference>
<dbReference type="SMART" id="SM01067">
    <property type="entry name" value="CBM_3"/>
    <property type="match status" value="1"/>
</dbReference>
<dbReference type="SUPFAM" id="SSF49384">
    <property type="entry name" value="Carbohydrate-binding domain"/>
    <property type="match status" value="1"/>
</dbReference>
<dbReference type="SUPFAM" id="SSF48208">
    <property type="entry name" value="Six-hairpin glycosidases"/>
    <property type="match status" value="1"/>
</dbReference>
<dbReference type="PROSITE" id="PS51172">
    <property type="entry name" value="CBM3"/>
    <property type="match status" value="1"/>
</dbReference>
<dbReference type="PROSITE" id="PS60032">
    <property type="entry name" value="GH9_1"/>
    <property type="match status" value="1"/>
</dbReference>
<dbReference type="PROSITE" id="PS00592">
    <property type="entry name" value="GH9_2"/>
    <property type="match status" value="1"/>
</dbReference>
<dbReference type="PROSITE" id="PS00698">
    <property type="entry name" value="GH9_3"/>
    <property type="match status" value="1"/>
</dbReference>
<sequence length="659" mass="74985">MLIFETYLILFKTVQITKRRIERRRLRLLNQCFTKKEGVSNREMASYNYVEVLQKSMLFYEAQRSGRLPESNRLNWRGDSGLKDGKDVGHDLTGGWYDAGDHVKFGLPMAYSAAVLAWTVYEYREAYEEAELLDEILDQIKWATDYFLKAHTGPNEFWAQVGDGNADHAWWGPAEVMPMNRPAFKIDEHCPGTEVAAQTAAALAAGSIIFKETDASYAAKLLTHAKQLYAFADRYRGKYTDCVTNAQPFYNSWSGYVDELIWGGIWLYLATNEETYLNKALKAVEEWPQDWDYTFTMSWDNTFFASQILLARITKENRFIESTERNLDYWTTGLVQNGKVERITYTPGGLAWLDQWGSLRYAANAAFLAFVYADWVSDQEKKNRYQSFAIKQTHYMLGDNPLNRSYVVGFGQNSPKHPHHRTAHGSWSNQLTNPPSHRHTLYGALVGGPNAQDQYDDDISDYISNEVATDYNAAFTGNIAKMVQLFGEGQSKLPNFPPKEQVEDEFFVEAAVMHNDTTSTQVKAVLYNRSGWPARSSQTLSFRYYVNLSEVFAKGFTEKDIQVTAAYNEGASLSPLKVYDASSRVYFAEIDFTGVVISPRGESEHKKEIQFRLSAPNGSNIWDASNDYSYQGLTSNMQKTTKIPVFEDGVLVFGTLPDK</sequence>
<comment type="function">
    <text evidence="6">Active on carboxymethyl cellulose and carboxymethyl cellulose-RBB but not avicel, xanthan gum, carboxymethyl-curdulan-RBB or carboxymethyl-xylan-RBB.</text>
</comment>
<comment type="catalytic activity">
    <reaction evidence="6">
        <text>Endohydrolysis of (1-&gt;4)-beta-D-glucosidic linkages in cellulose, lichenin and cereal beta-D-glucans.</text>
        <dbReference type="EC" id="3.2.1.4"/>
    </reaction>
</comment>
<comment type="activity regulation">
    <text evidence="6">Strongly inhibited by ZnCl(2) and by EDTA.</text>
</comment>
<comment type="biophysicochemical properties">
    <phDependence>
        <text evidence="6">Optimum pH is 5-8.</text>
    </phDependence>
    <temperatureDependence>
        <text evidence="6">Optimum temperature is 60 degrees Celsius. Retains more than 90% activity after 24 hours at 50 degrees Celsius.</text>
    </temperatureDependence>
</comment>
<comment type="subcellular location">
    <subcellularLocation>
        <location evidence="6">Secreted</location>
    </subcellularLocation>
</comment>
<comment type="similarity">
    <text evidence="4 7">Belongs to the glycosyl hydrolase 9 (cellulase E) family.</text>
</comment>
<organism>
    <name type="scientific">Bacillus pumilus</name>
    <name type="common">Bacillus mesentericus</name>
    <dbReference type="NCBI Taxonomy" id="1408"/>
    <lineage>
        <taxon>Bacteria</taxon>
        <taxon>Bacillati</taxon>
        <taxon>Bacillota</taxon>
        <taxon>Bacilli</taxon>
        <taxon>Bacillales</taxon>
        <taxon>Bacillaceae</taxon>
        <taxon>Bacillus</taxon>
    </lineage>
</organism>
<proteinExistence type="evidence at protein level"/>
<evidence type="ECO:0000255" key="1">
    <source>
        <dbReference type="PROSITE-ProRule" id="PRU00513"/>
    </source>
</evidence>
<evidence type="ECO:0000255" key="2">
    <source>
        <dbReference type="PROSITE-ProRule" id="PRU10059"/>
    </source>
</evidence>
<evidence type="ECO:0000255" key="3">
    <source>
        <dbReference type="PROSITE-ProRule" id="PRU10060"/>
    </source>
</evidence>
<evidence type="ECO:0000255" key="4">
    <source>
        <dbReference type="PROSITE-ProRule" id="PRU10140"/>
    </source>
</evidence>
<evidence type="ECO:0000256" key="5">
    <source>
        <dbReference type="SAM" id="MobiDB-lite"/>
    </source>
</evidence>
<evidence type="ECO:0000269" key="6">
    <source>
    </source>
</evidence>
<evidence type="ECO:0000305" key="7"/>
<reference key="1">
    <citation type="journal article" date="2005" name="Appl. Microbiol. Biotechnol.">
        <title>Molecular characterization of a beta-1,4-endoglucanase from an endophytic Bacillus pumilus strain.</title>
        <authorList>
            <person name="Lima A.O.S."/>
            <person name="Quecine M.C."/>
            <person name="Fungaro M.H.P."/>
            <person name="Andreote F.D."/>
            <person name="Maccheroni W. Jr."/>
            <person name="Araujo W.L."/>
            <person name="Silva-Filho M.C."/>
            <person name="Pizzirani-Kleiner A.A."/>
            <person name="Azevedo J.L."/>
        </authorList>
    </citation>
    <scope>NUCLEOTIDE SEQUENCE [GENOMIC DNA]</scope>
    <scope>FUNCTION</scope>
    <scope>CATALYTIC ACTIVITY</scope>
    <scope>ACTIVITY REGULATION</scope>
    <scope>SUBCELLULAR LOCATION</scope>
    <scope>BIOPHYSICOCHEMICAL PROPERTIES</scope>
    <source>
        <strain>CL16</strain>
    </source>
</reference>
<accession>Q5YLG1</accession>